<keyword id="KW-1003">Cell membrane</keyword>
<keyword id="KW-0325">Glycoprotein</keyword>
<keyword id="KW-0472">Membrane</keyword>
<keyword id="KW-1185">Reference proteome</keyword>
<keyword id="KW-0812">Transmembrane</keyword>
<keyword id="KW-1133">Transmembrane helix</keyword>
<comment type="subunit">
    <text evidence="1">Homodimer and heterodimers.</text>
</comment>
<comment type="subcellular location">
    <subcellularLocation>
        <location evidence="1">Cell membrane</location>
        <topology evidence="1">Multi-pass membrane protein</topology>
    </subcellularLocation>
</comment>
<comment type="similarity">
    <text evidence="3">Belongs to the Casparian strip membrane proteins (CASP) family.</text>
</comment>
<evidence type="ECO:0000250" key="1"/>
<evidence type="ECO:0000255" key="2"/>
<evidence type="ECO:0000305" key="3"/>
<name>CSPL4_MAIZE</name>
<proteinExistence type="evidence at transcript level"/>
<accession>B4FAP1</accession>
<accession>B6TY26</accession>
<feature type="chain" id="PRO_0000370276" description="CASP-like protein 1E1">
    <location>
        <begin position="1"/>
        <end position="220"/>
    </location>
</feature>
<feature type="topological domain" description="Cytoplasmic" evidence="2">
    <location>
        <begin position="1"/>
        <end position="57"/>
    </location>
</feature>
<feature type="transmembrane region" description="Helical" evidence="2">
    <location>
        <begin position="58"/>
        <end position="78"/>
    </location>
</feature>
<feature type="topological domain" description="Extracellular" evidence="2">
    <location>
        <begin position="79"/>
        <end position="108"/>
    </location>
</feature>
<feature type="transmembrane region" description="Helical" evidence="2">
    <location>
        <begin position="109"/>
        <end position="129"/>
    </location>
</feature>
<feature type="topological domain" description="Cytoplasmic" evidence="2">
    <location>
        <begin position="130"/>
        <end position="144"/>
    </location>
</feature>
<feature type="transmembrane region" description="Helical" evidence="2">
    <location>
        <begin position="145"/>
        <end position="165"/>
    </location>
</feature>
<feature type="topological domain" description="Extracellular" evidence="2">
    <location>
        <begin position="166"/>
        <end position="187"/>
    </location>
</feature>
<feature type="transmembrane region" description="Helical" evidence="2">
    <location>
        <begin position="188"/>
        <end position="208"/>
    </location>
</feature>
<feature type="topological domain" description="Cytoplasmic" evidence="2">
    <location>
        <begin position="209"/>
        <end position="220"/>
    </location>
</feature>
<feature type="glycosylation site" description="N-linked (GlcNAc...) asparagine" evidence="2">
    <location>
        <position position="103"/>
    </location>
</feature>
<feature type="sequence conflict" description="In Ref. 1; ACG42009." evidence="3" ref="1">
    <original>T</original>
    <variation>S</variation>
    <location>
        <position position="90"/>
    </location>
</feature>
<sequence>METPTPRVKPGFNGVGVGMGSSVNGSSRRAGYYMGPAGAVAVAGGGRAAAAAPVDGCSVALRVFVLAATLVSAVVMGVDRQTSTIRITVTDALPPLEVPLTANWSYSSAFVYFVVANAMVCLFSAAALAACRSRAAMVPVMVGDLLALALLYSAVGAAAEFGILGERGNSHVRWPKVCNVYGRFCERAMAAVIVSLIAAFANLVLLMLNILTIHKSSSYY</sequence>
<reference key="1">
    <citation type="journal article" date="2009" name="Plant Mol. Biol.">
        <title>Insights into corn genes derived from large-scale cDNA sequencing.</title>
        <authorList>
            <person name="Alexandrov N.N."/>
            <person name="Brover V.V."/>
            <person name="Freidin S."/>
            <person name="Troukhan M.E."/>
            <person name="Tatarinova T.V."/>
            <person name="Zhang H."/>
            <person name="Swaller T.J."/>
            <person name="Lu Y.-P."/>
            <person name="Bouck J."/>
            <person name="Flavell R.B."/>
            <person name="Feldmann K.A."/>
        </authorList>
    </citation>
    <scope>NUCLEOTIDE SEQUENCE [LARGE SCALE MRNA]</scope>
</reference>
<reference key="2">
    <citation type="submission" date="2009-01" db="EMBL/GenBank/DDBJ databases">
        <title>Maize full-length cDNA project.</title>
        <authorList>
            <person name="Yu Y."/>
            <person name="Currie J."/>
            <person name="Lomeli R."/>
            <person name="Angelova A."/>
            <person name="Collura K."/>
            <person name="Wissotski M."/>
            <person name="Campos D."/>
            <person name="Kudrna D."/>
            <person name="Golser W."/>
            <person name="Ashely E."/>
            <person name="Haller K."/>
            <person name="Descour A."/>
            <person name="Fernandes J."/>
            <person name="Zuccolo A."/>
            <person name="Soderlund C."/>
            <person name="Walbot V."/>
        </authorList>
    </citation>
    <scope>NUCLEOTIDE SEQUENCE [LARGE SCALE MRNA]</scope>
    <source>
        <strain>cv. B73</strain>
    </source>
</reference>
<reference key="3">
    <citation type="journal article" date="2014" name="Plant Physiol.">
        <title>Functional and evolutionary analysis of the CASPARIAN STRIP MEMBRANE DOMAIN PROTEIN family.</title>
        <authorList>
            <person name="Roppolo D."/>
            <person name="Boeckmann B."/>
            <person name="Pfister A."/>
            <person name="Boutet E."/>
            <person name="Rubio M.C."/>
            <person name="Denervaud-Tendon V."/>
            <person name="Vermeer J.E."/>
            <person name="Gheyselinck J."/>
            <person name="Xenarios I."/>
            <person name="Geldner N."/>
        </authorList>
    </citation>
    <scope>GENE FAMILY</scope>
    <scope>NOMENCLATURE</scope>
</reference>
<protein>
    <recommendedName>
        <fullName>CASP-like protein 1E1</fullName>
        <shortName>ZmCASPL1E1</shortName>
    </recommendedName>
</protein>
<organism>
    <name type="scientific">Zea mays</name>
    <name type="common">Maize</name>
    <dbReference type="NCBI Taxonomy" id="4577"/>
    <lineage>
        <taxon>Eukaryota</taxon>
        <taxon>Viridiplantae</taxon>
        <taxon>Streptophyta</taxon>
        <taxon>Embryophyta</taxon>
        <taxon>Tracheophyta</taxon>
        <taxon>Spermatophyta</taxon>
        <taxon>Magnoliopsida</taxon>
        <taxon>Liliopsida</taxon>
        <taxon>Poales</taxon>
        <taxon>Poaceae</taxon>
        <taxon>PACMAD clade</taxon>
        <taxon>Panicoideae</taxon>
        <taxon>Andropogonodae</taxon>
        <taxon>Andropogoneae</taxon>
        <taxon>Tripsacinae</taxon>
        <taxon>Zea</taxon>
    </lineage>
</organism>
<dbReference type="EMBL" id="EU966666">
    <property type="protein sequence ID" value="ACG38784.1"/>
    <property type="molecule type" value="mRNA"/>
</dbReference>
<dbReference type="EMBL" id="EU969891">
    <property type="protein sequence ID" value="ACG42009.1"/>
    <property type="molecule type" value="mRNA"/>
</dbReference>
<dbReference type="EMBL" id="BT034179">
    <property type="protein sequence ID" value="ACF79184.1"/>
    <property type="molecule type" value="mRNA"/>
</dbReference>
<dbReference type="EMBL" id="BT054362">
    <property type="protein sequence ID" value="ACL52969.1"/>
    <property type="molecule type" value="mRNA"/>
</dbReference>
<dbReference type="RefSeq" id="NP_001130820.1">
    <property type="nucleotide sequence ID" value="NM_001137348.1"/>
</dbReference>
<dbReference type="FunCoup" id="B4FAP1">
    <property type="interactions" value="463"/>
</dbReference>
<dbReference type="STRING" id="4577.B4FAP1"/>
<dbReference type="PaxDb" id="4577-GRMZM2G104639_P01"/>
<dbReference type="EnsemblPlants" id="Zm00001eb131630_T001">
    <property type="protein sequence ID" value="Zm00001eb131630_P001"/>
    <property type="gene ID" value="Zm00001eb131630"/>
</dbReference>
<dbReference type="GeneID" id="100191924"/>
<dbReference type="Gramene" id="Zm00001eb131630_T001">
    <property type="protein sequence ID" value="Zm00001eb131630_P001"/>
    <property type="gene ID" value="Zm00001eb131630"/>
</dbReference>
<dbReference type="KEGG" id="zma:100191924"/>
<dbReference type="eggNOG" id="ENOG502RZNK">
    <property type="taxonomic scope" value="Eukaryota"/>
</dbReference>
<dbReference type="HOGENOM" id="CLU_066104_1_1_1"/>
<dbReference type="InParanoid" id="B4FAP1"/>
<dbReference type="OMA" id="NNLNGME"/>
<dbReference type="OrthoDB" id="772477at2759"/>
<dbReference type="Proteomes" id="UP000007305">
    <property type="component" value="Chromosome 3"/>
</dbReference>
<dbReference type="ExpressionAtlas" id="B4FAP1">
    <property type="expression patterns" value="baseline and differential"/>
</dbReference>
<dbReference type="GO" id="GO:0005886">
    <property type="term" value="C:plasma membrane"/>
    <property type="evidence" value="ECO:0007669"/>
    <property type="project" value="UniProtKB-SubCell"/>
</dbReference>
<dbReference type="InterPro" id="IPR006459">
    <property type="entry name" value="CASP/CASPL"/>
</dbReference>
<dbReference type="InterPro" id="IPR006702">
    <property type="entry name" value="CASP_dom"/>
</dbReference>
<dbReference type="InterPro" id="IPR044173">
    <property type="entry name" value="CASPL"/>
</dbReference>
<dbReference type="NCBIfam" id="TIGR01569">
    <property type="entry name" value="A_tha_TIGR01569"/>
    <property type="match status" value="1"/>
</dbReference>
<dbReference type="PANTHER" id="PTHR36488">
    <property type="entry name" value="CASP-LIKE PROTEIN 1U1"/>
    <property type="match status" value="1"/>
</dbReference>
<dbReference type="PANTHER" id="PTHR36488:SF8">
    <property type="entry name" value="CASP-LIKE PROTEIN 1U1"/>
    <property type="match status" value="1"/>
</dbReference>
<dbReference type="Pfam" id="PF04535">
    <property type="entry name" value="CASP_dom"/>
    <property type="match status" value="1"/>
</dbReference>